<name>RL18_CHLPM</name>
<dbReference type="EMBL" id="CP000607">
    <property type="protein sequence ID" value="ABP36284.1"/>
    <property type="molecule type" value="Genomic_DNA"/>
</dbReference>
<dbReference type="SMR" id="A4SCS5"/>
<dbReference type="STRING" id="290318.Cvib_0262"/>
<dbReference type="KEGG" id="pvi:Cvib_0262"/>
<dbReference type="eggNOG" id="COG0256">
    <property type="taxonomic scope" value="Bacteria"/>
</dbReference>
<dbReference type="HOGENOM" id="CLU_098841_0_1_10"/>
<dbReference type="OrthoDB" id="9810939at2"/>
<dbReference type="GO" id="GO:0022625">
    <property type="term" value="C:cytosolic large ribosomal subunit"/>
    <property type="evidence" value="ECO:0007669"/>
    <property type="project" value="TreeGrafter"/>
</dbReference>
<dbReference type="GO" id="GO:0008097">
    <property type="term" value="F:5S rRNA binding"/>
    <property type="evidence" value="ECO:0007669"/>
    <property type="project" value="TreeGrafter"/>
</dbReference>
<dbReference type="GO" id="GO:0003735">
    <property type="term" value="F:structural constituent of ribosome"/>
    <property type="evidence" value="ECO:0007669"/>
    <property type="project" value="InterPro"/>
</dbReference>
<dbReference type="GO" id="GO:0006412">
    <property type="term" value="P:translation"/>
    <property type="evidence" value="ECO:0007669"/>
    <property type="project" value="UniProtKB-UniRule"/>
</dbReference>
<dbReference type="CDD" id="cd00432">
    <property type="entry name" value="Ribosomal_L18_L5e"/>
    <property type="match status" value="1"/>
</dbReference>
<dbReference type="FunFam" id="3.30.420.100:FF:000001">
    <property type="entry name" value="50S ribosomal protein L18"/>
    <property type="match status" value="1"/>
</dbReference>
<dbReference type="Gene3D" id="3.30.420.100">
    <property type="match status" value="1"/>
</dbReference>
<dbReference type="HAMAP" id="MF_01337_B">
    <property type="entry name" value="Ribosomal_uL18_B"/>
    <property type="match status" value="1"/>
</dbReference>
<dbReference type="InterPro" id="IPR004389">
    <property type="entry name" value="Ribosomal_uL18_bac-type"/>
</dbReference>
<dbReference type="InterPro" id="IPR005484">
    <property type="entry name" value="Ribosomal_uL18_bac/euk"/>
</dbReference>
<dbReference type="NCBIfam" id="TIGR00060">
    <property type="entry name" value="L18_bact"/>
    <property type="match status" value="1"/>
</dbReference>
<dbReference type="PANTHER" id="PTHR12899">
    <property type="entry name" value="39S RIBOSOMAL PROTEIN L18, MITOCHONDRIAL"/>
    <property type="match status" value="1"/>
</dbReference>
<dbReference type="PANTHER" id="PTHR12899:SF3">
    <property type="entry name" value="LARGE RIBOSOMAL SUBUNIT PROTEIN UL18M"/>
    <property type="match status" value="1"/>
</dbReference>
<dbReference type="Pfam" id="PF00861">
    <property type="entry name" value="Ribosomal_L18p"/>
    <property type="match status" value="1"/>
</dbReference>
<dbReference type="SUPFAM" id="SSF53137">
    <property type="entry name" value="Translational machinery components"/>
    <property type="match status" value="1"/>
</dbReference>
<sequence length="119" mass="12947">MSQIDKASRRQKIKDRSRAAVAGTAVKPRLCIYRSLSQIYAQLIDDSGSTTILAVSSMSKENKELKGAGVEVCRTVGRQLGEKAMAKGITTVVFDRNGFRYHGRVKALADGAREAGLIF</sequence>
<accession>A4SCS5</accession>
<evidence type="ECO:0000255" key="1">
    <source>
        <dbReference type="HAMAP-Rule" id="MF_01337"/>
    </source>
</evidence>
<evidence type="ECO:0000305" key="2"/>
<proteinExistence type="inferred from homology"/>
<organism>
    <name type="scientific">Chlorobium phaeovibrioides (strain DSM 265 / 1930)</name>
    <name type="common">Prosthecochloris vibrioformis (strain DSM 265)</name>
    <dbReference type="NCBI Taxonomy" id="290318"/>
    <lineage>
        <taxon>Bacteria</taxon>
        <taxon>Pseudomonadati</taxon>
        <taxon>Chlorobiota</taxon>
        <taxon>Chlorobiia</taxon>
        <taxon>Chlorobiales</taxon>
        <taxon>Chlorobiaceae</taxon>
        <taxon>Chlorobium/Pelodictyon group</taxon>
        <taxon>Chlorobium</taxon>
    </lineage>
</organism>
<reference key="1">
    <citation type="submission" date="2007-03" db="EMBL/GenBank/DDBJ databases">
        <title>Complete sequence of Prosthecochloris vibrioformis DSM 265.</title>
        <authorList>
            <consortium name="US DOE Joint Genome Institute"/>
            <person name="Copeland A."/>
            <person name="Lucas S."/>
            <person name="Lapidus A."/>
            <person name="Barry K."/>
            <person name="Detter J.C."/>
            <person name="Glavina del Rio T."/>
            <person name="Hammon N."/>
            <person name="Israni S."/>
            <person name="Pitluck S."/>
            <person name="Schmutz J."/>
            <person name="Larimer F."/>
            <person name="Land M."/>
            <person name="Hauser L."/>
            <person name="Mikhailova N."/>
            <person name="Li T."/>
            <person name="Overmann J."/>
            <person name="Schuster S.C."/>
            <person name="Bryant D.A."/>
            <person name="Richardson P."/>
        </authorList>
    </citation>
    <scope>NUCLEOTIDE SEQUENCE [LARGE SCALE GENOMIC DNA]</scope>
    <source>
        <strain>DSM 265 / 1930</strain>
    </source>
</reference>
<comment type="function">
    <text evidence="1">This is one of the proteins that bind and probably mediate the attachment of the 5S RNA into the large ribosomal subunit, where it forms part of the central protuberance.</text>
</comment>
<comment type="subunit">
    <text evidence="1">Part of the 50S ribosomal subunit; part of the 5S rRNA/L5/L18/L25 subcomplex. Contacts the 5S and 23S rRNAs.</text>
</comment>
<comment type="similarity">
    <text evidence="1">Belongs to the universal ribosomal protein uL18 family.</text>
</comment>
<keyword id="KW-0687">Ribonucleoprotein</keyword>
<keyword id="KW-0689">Ribosomal protein</keyword>
<keyword id="KW-0694">RNA-binding</keyword>
<keyword id="KW-0699">rRNA-binding</keyword>
<gene>
    <name evidence="1" type="primary">rplR</name>
    <name type="ordered locus">Cvib_0262</name>
</gene>
<protein>
    <recommendedName>
        <fullName evidence="1">Large ribosomal subunit protein uL18</fullName>
    </recommendedName>
    <alternativeName>
        <fullName evidence="2">50S ribosomal protein L18</fullName>
    </alternativeName>
</protein>
<feature type="chain" id="PRO_1000086678" description="Large ribosomal subunit protein uL18">
    <location>
        <begin position="1"/>
        <end position="119"/>
    </location>
</feature>